<reference key="1">
    <citation type="submission" date="2009-06" db="EMBL/GenBank/DDBJ databases">
        <title>Complete sequence of Desulfovibrio salexigens DSM 2638.</title>
        <authorList>
            <consortium name="US DOE Joint Genome Institute"/>
            <person name="Lucas S."/>
            <person name="Copeland A."/>
            <person name="Lapidus A."/>
            <person name="Glavina del Rio T."/>
            <person name="Tice H."/>
            <person name="Bruce D."/>
            <person name="Goodwin L."/>
            <person name="Pitluck S."/>
            <person name="Munk A.C."/>
            <person name="Brettin T."/>
            <person name="Detter J.C."/>
            <person name="Han C."/>
            <person name="Tapia R."/>
            <person name="Larimer F."/>
            <person name="Land M."/>
            <person name="Hauser L."/>
            <person name="Kyrpides N."/>
            <person name="Anderson I."/>
            <person name="Wall J.D."/>
            <person name="Arkin A.P."/>
            <person name="Dehal P."/>
            <person name="Chivian D."/>
            <person name="Giles B."/>
            <person name="Hazen T.C."/>
        </authorList>
    </citation>
    <scope>NUCLEOTIDE SEQUENCE [LARGE SCALE GENOMIC DNA]</scope>
    <source>
        <strain>ATCC 14822 / DSM 2638 / NCIMB 8403 / VKM B-1763</strain>
    </source>
</reference>
<accession>C6BSP7</accession>
<comment type="function">
    <text evidence="1">Produces ATP from ADP in the presence of a proton gradient across the membrane. The gamma chain is believed to be important in regulating ATPase activity and the flow of protons through the CF(0) complex.</text>
</comment>
<comment type="subunit">
    <text evidence="1">F-type ATPases have 2 components, CF(1) - the catalytic core - and CF(0) - the membrane proton channel. CF(1) has five subunits: alpha(3), beta(3), gamma(1), delta(1), epsilon(1). CF(0) has three main subunits: a, b and c.</text>
</comment>
<comment type="subcellular location">
    <subcellularLocation>
        <location evidence="1">Cell inner membrane</location>
        <topology evidence="1">Peripheral membrane protein</topology>
    </subcellularLocation>
</comment>
<comment type="similarity">
    <text evidence="1">Belongs to the ATPase gamma chain family.</text>
</comment>
<name>ATPG_MARSD</name>
<organism>
    <name type="scientific">Maridesulfovibrio salexigens (strain ATCC 14822 / DSM 2638 / NCIMB 8403 / VKM B-1763)</name>
    <name type="common">Desulfovibrio salexigens</name>
    <dbReference type="NCBI Taxonomy" id="526222"/>
    <lineage>
        <taxon>Bacteria</taxon>
        <taxon>Pseudomonadati</taxon>
        <taxon>Thermodesulfobacteriota</taxon>
        <taxon>Desulfovibrionia</taxon>
        <taxon>Desulfovibrionales</taxon>
        <taxon>Desulfovibrionaceae</taxon>
        <taxon>Maridesulfovibrio</taxon>
    </lineage>
</organism>
<evidence type="ECO:0000255" key="1">
    <source>
        <dbReference type="HAMAP-Rule" id="MF_00815"/>
    </source>
</evidence>
<keyword id="KW-0066">ATP synthesis</keyword>
<keyword id="KW-0997">Cell inner membrane</keyword>
<keyword id="KW-1003">Cell membrane</keyword>
<keyword id="KW-0139">CF(1)</keyword>
<keyword id="KW-0375">Hydrogen ion transport</keyword>
<keyword id="KW-0406">Ion transport</keyword>
<keyword id="KW-0472">Membrane</keyword>
<keyword id="KW-1185">Reference proteome</keyword>
<keyword id="KW-0813">Transport</keyword>
<feature type="chain" id="PRO_1000213031" description="ATP synthase gamma chain">
    <location>
        <begin position="1"/>
        <end position="292"/>
    </location>
</feature>
<proteinExistence type="inferred from homology"/>
<protein>
    <recommendedName>
        <fullName evidence="1">ATP synthase gamma chain</fullName>
    </recommendedName>
    <alternativeName>
        <fullName evidence="1">ATP synthase F1 sector gamma subunit</fullName>
    </alternativeName>
    <alternativeName>
        <fullName evidence="1">F-ATPase gamma subunit</fullName>
    </alternativeName>
</protein>
<sequence>MASLKDVQNQIVSIKKTKQITKAMNMVASAKLRGAQDRIERFRPYADKFYEMLGDLAAGADSSVHPLLEVHEEIKTVGIVLTTSDRGLCGSFNANMINAALKKAAEKKAEGKAVKFYCVGKKGAAAIKKTEYEIVEAYNDDMTHFDFNLAASIGNKVIDAYLAEELDEVFLVFGEFVNVASQPPNTLQILPMSSDAAGEEGESGANSEYIYEPSVEGLLAELLPRFVKVQVYRGLLDTSCSEHAARMAAMDNASRACDDMTETLTLLYNKTRQAAITADLMDIVGGAEALKG</sequence>
<gene>
    <name evidence="1" type="primary">atpG</name>
    <name type="ordered locus">Desal_3455</name>
</gene>
<dbReference type="EMBL" id="CP001649">
    <property type="protein sequence ID" value="ACS81503.1"/>
    <property type="molecule type" value="Genomic_DNA"/>
</dbReference>
<dbReference type="RefSeq" id="WP_015853319.1">
    <property type="nucleotide sequence ID" value="NC_012881.1"/>
</dbReference>
<dbReference type="SMR" id="C6BSP7"/>
<dbReference type="STRING" id="526222.Desal_3455"/>
<dbReference type="KEGG" id="dsa:Desal_3455"/>
<dbReference type="eggNOG" id="COG0224">
    <property type="taxonomic scope" value="Bacteria"/>
</dbReference>
<dbReference type="HOGENOM" id="CLU_050669_0_1_7"/>
<dbReference type="OrthoDB" id="9812769at2"/>
<dbReference type="Proteomes" id="UP000002601">
    <property type="component" value="Chromosome"/>
</dbReference>
<dbReference type="GO" id="GO:0005886">
    <property type="term" value="C:plasma membrane"/>
    <property type="evidence" value="ECO:0007669"/>
    <property type="project" value="UniProtKB-SubCell"/>
</dbReference>
<dbReference type="GO" id="GO:0045259">
    <property type="term" value="C:proton-transporting ATP synthase complex"/>
    <property type="evidence" value="ECO:0007669"/>
    <property type="project" value="UniProtKB-KW"/>
</dbReference>
<dbReference type="GO" id="GO:0005524">
    <property type="term" value="F:ATP binding"/>
    <property type="evidence" value="ECO:0007669"/>
    <property type="project" value="UniProtKB-UniRule"/>
</dbReference>
<dbReference type="GO" id="GO:0046933">
    <property type="term" value="F:proton-transporting ATP synthase activity, rotational mechanism"/>
    <property type="evidence" value="ECO:0007669"/>
    <property type="project" value="UniProtKB-UniRule"/>
</dbReference>
<dbReference type="GO" id="GO:0042777">
    <property type="term" value="P:proton motive force-driven plasma membrane ATP synthesis"/>
    <property type="evidence" value="ECO:0007669"/>
    <property type="project" value="UniProtKB-UniRule"/>
</dbReference>
<dbReference type="CDD" id="cd12151">
    <property type="entry name" value="F1-ATPase_gamma"/>
    <property type="match status" value="1"/>
</dbReference>
<dbReference type="Gene3D" id="3.40.1380.10">
    <property type="match status" value="1"/>
</dbReference>
<dbReference type="Gene3D" id="1.10.287.80">
    <property type="entry name" value="ATP synthase, gamma subunit, helix hairpin domain"/>
    <property type="match status" value="2"/>
</dbReference>
<dbReference type="HAMAP" id="MF_00815">
    <property type="entry name" value="ATP_synth_gamma_bact"/>
    <property type="match status" value="1"/>
</dbReference>
<dbReference type="InterPro" id="IPR035968">
    <property type="entry name" value="ATP_synth_F1_ATPase_gsu"/>
</dbReference>
<dbReference type="InterPro" id="IPR000131">
    <property type="entry name" value="ATP_synth_F1_gsu"/>
</dbReference>
<dbReference type="NCBIfam" id="TIGR01146">
    <property type="entry name" value="ATPsyn_F1gamma"/>
    <property type="match status" value="1"/>
</dbReference>
<dbReference type="NCBIfam" id="NF009957">
    <property type="entry name" value="PRK13424.1"/>
    <property type="match status" value="1"/>
</dbReference>
<dbReference type="PANTHER" id="PTHR11693">
    <property type="entry name" value="ATP SYNTHASE GAMMA CHAIN"/>
    <property type="match status" value="1"/>
</dbReference>
<dbReference type="PANTHER" id="PTHR11693:SF22">
    <property type="entry name" value="ATP SYNTHASE SUBUNIT GAMMA, MITOCHONDRIAL"/>
    <property type="match status" value="1"/>
</dbReference>
<dbReference type="Pfam" id="PF00231">
    <property type="entry name" value="ATP-synt"/>
    <property type="match status" value="1"/>
</dbReference>
<dbReference type="PRINTS" id="PR00126">
    <property type="entry name" value="ATPASEGAMMA"/>
</dbReference>
<dbReference type="SUPFAM" id="SSF52943">
    <property type="entry name" value="ATP synthase (F1-ATPase), gamma subunit"/>
    <property type="match status" value="1"/>
</dbReference>